<comment type="function">
    <text evidence="1">Binds directly to 16S ribosomal RNA.</text>
</comment>
<comment type="similarity">
    <text evidence="1">Belongs to the bacterial ribosomal protein bS20 family.</text>
</comment>
<proteinExistence type="inferred from homology"/>
<keyword id="KW-0687">Ribonucleoprotein</keyword>
<keyword id="KW-0689">Ribosomal protein</keyword>
<keyword id="KW-0694">RNA-binding</keyword>
<keyword id="KW-0699">rRNA-binding</keyword>
<evidence type="ECO:0000255" key="1">
    <source>
        <dbReference type="HAMAP-Rule" id="MF_00500"/>
    </source>
</evidence>
<evidence type="ECO:0000305" key="2"/>
<accession>A6QHC8</accession>
<feature type="chain" id="PRO_1000126518" description="Small ribosomal subunit protein bS20">
    <location>
        <begin position="1"/>
        <end position="83"/>
    </location>
</feature>
<reference key="1">
    <citation type="journal article" date="2008" name="J. Bacteriol.">
        <title>Genome sequence of Staphylococcus aureus strain Newman and comparative analysis of staphylococcal genomes: polymorphism and evolution of two major pathogenicity islands.</title>
        <authorList>
            <person name="Baba T."/>
            <person name="Bae T."/>
            <person name="Schneewind O."/>
            <person name="Takeuchi F."/>
            <person name="Hiramatsu K."/>
        </authorList>
    </citation>
    <scope>NUCLEOTIDE SEQUENCE [LARGE SCALE GENOMIC DNA]</scope>
    <source>
        <strain>Newman</strain>
    </source>
</reference>
<name>RS20_STAAE</name>
<organism>
    <name type="scientific">Staphylococcus aureus (strain Newman)</name>
    <dbReference type="NCBI Taxonomy" id="426430"/>
    <lineage>
        <taxon>Bacteria</taxon>
        <taxon>Bacillati</taxon>
        <taxon>Bacillota</taxon>
        <taxon>Bacilli</taxon>
        <taxon>Bacillales</taxon>
        <taxon>Staphylococcaceae</taxon>
        <taxon>Staphylococcus</taxon>
    </lineage>
</organism>
<dbReference type="EMBL" id="AP009351">
    <property type="protein sequence ID" value="BAF67760.1"/>
    <property type="molecule type" value="Genomic_DNA"/>
</dbReference>
<dbReference type="RefSeq" id="WP_001274017.1">
    <property type="nucleotide sequence ID" value="NZ_JBBIAE010000001.1"/>
</dbReference>
<dbReference type="SMR" id="A6QHC8"/>
<dbReference type="GeneID" id="66839775"/>
<dbReference type="KEGG" id="sae:NWMN_1488"/>
<dbReference type="HOGENOM" id="CLU_160655_1_1_9"/>
<dbReference type="Proteomes" id="UP000006386">
    <property type="component" value="Chromosome"/>
</dbReference>
<dbReference type="GO" id="GO:0005829">
    <property type="term" value="C:cytosol"/>
    <property type="evidence" value="ECO:0007669"/>
    <property type="project" value="TreeGrafter"/>
</dbReference>
<dbReference type="GO" id="GO:0015935">
    <property type="term" value="C:small ribosomal subunit"/>
    <property type="evidence" value="ECO:0007669"/>
    <property type="project" value="TreeGrafter"/>
</dbReference>
<dbReference type="GO" id="GO:0070181">
    <property type="term" value="F:small ribosomal subunit rRNA binding"/>
    <property type="evidence" value="ECO:0007669"/>
    <property type="project" value="TreeGrafter"/>
</dbReference>
<dbReference type="GO" id="GO:0003735">
    <property type="term" value="F:structural constituent of ribosome"/>
    <property type="evidence" value="ECO:0007669"/>
    <property type="project" value="InterPro"/>
</dbReference>
<dbReference type="GO" id="GO:0006412">
    <property type="term" value="P:translation"/>
    <property type="evidence" value="ECO:0007669"/>
    <property type="project" value="UniProtKB-UniRule"/>
</dbReference>
<dbReference type="Gene3D" id="1.20.58.110">
    <property type="entry name" value="Ribosomal protein S20"/>
    <property type="match status" value="1"/>
</dbReference>
<dbReference type="HAMAP" id="MF_00500">
    <property type="entry name" value="Ribosomal_bS20"/>
    <property type="match status" value="1"/>
</dbReference>
<dbReference type="InterPro" id="IPR002583">
    <property type="entry name" value="Ribosomal_bS20"/>
</dbReference>
<dbReference type="InterPro" id="IPR036510">
    <property type="entry name" value="Ribosomal_bS20_sf"/>
</dbReference>
<dbReference type="NCBIfam" id="TIGR00029">
    <property type="entry name" value="S20"/>
    <property type="match status" value="1"/>
</dbReference>
<dbReference type="PANTHER" id="PTHR33398">
    <property type="entry name" value="30S RIBOSOMAL PROTEIN S20"/>
    <property type="match status" value="1"/>
</dbReference>
<dbReference type="PANTHER" id="PTHR33398:SF1">
    <property type="entry name" value="SMALL RIBOSOMAL SUBUNIT PROTEIN BS20C"/>
    <property type="match status" value="1"/>
</dbReference>
<dbReference type="Pfam" id="PF01649">
    <property type="entry name" value="Ribosomal_S20p"/>
    <property type="match status" value="1"/>
</dbReference>
<dbReference type="SUPFAM" id="SSF46992">
    <property type="entry name" value="Ribosomal protein S20"/>
    <property type="match status" value="1"/>
</dbReference>
<gene>
    <name evidence="1" type="primary">rpsT</name>
    <name type="ordered locus">NWMN_1488</name>
</gene>
<sequence>MANIKSAIKRVKTTEKAEARNISQKSAMRTAVKNAKTAVSNNADNKNELVSLAVKLVDKAAQSNLIHSNKADRIKSQLMTANK</sequence>
<protein>
    <recommendedName>
        <fullName evidence="1">Small ribosomal subunit protein bS20</fullName>
    </recommendedName>
    <alternativeName>
        <fullName evidence="2">30S ribosomal protein S20</fullName>
    </alternativeName>
</protein>